<gene>
    <name evidence="1" type="primary">xylA</name>
    <name type="ordered locus">SeAg_B3875</name>
</gene>
<accession>B5EX72</accession>
<reference key="1">
    <citation type="journal article" date="2011" name="J. Bacteriol.">
        <title>Comparative genomics of 28 Salmonella enterica isolates: evidence for CRISPR-mediated adaptive sublineage evolution.</title>
        <authorList>
            <person name="Fricke W.F."/>
            <person name="Mammel M.K."/>
            <person name="McDermott P.F."/>
            <person name="Tartera C."/>
            <person name="White D.G."/>
            <person name="Leclerc J.E."/>
            <person name="Ravel J."/>
            <person name="Cebula T.A."/>
        </authorList>
    </citation>
    <scope>NUCLEOTIDE SEQUENCE [LARGE SCALE GENOMIC DNA]</scope>
    <source>
        <strain>SL483</strain>
    </source>
</reference>
<feature type="chain" id="PRO_1000200303" description="Xylose isomerase">
    <location>
        <begin position="1"/>
        <end position="440"/>
    </location>
</feature>
<feature type="active site" evidence="1">
    <location>
        <position position="101"/>
    </location>
</feature>
<feature type="active site" evidence="1">
    <location>
        <position position="104"/>
    </location>
</feature>
<feature type="binding site" evidence="1">
    <location>
        <position position="232"/>
    </location>
    <ligand>
        <name>Mg(2+)</name>
        <dbReference type="ChEBI" id="CHEBI:18420"/>
        <label>1</label>
    </ligand>
</feature>
<feature type="binding site" evidence="1">
    <location>
        <position position="268"/>
    </location>
    <ligand>
        <name>Mg(2+)</name>
        <dbReference type="ChEBI" id="CHEBI:18420"/>
        <label>1</label>
    </ligand>
</feature>
<feature type="binding site" evidence="1">
    <location>
        <position position="268"/>
    </location>
    <ligand>
        <name>Mg(2+)</name>
        <dbReference type="ChEBI" id="CHEBI:18420"/>
        <label>2</label>
    </ligand>
</feature>
<feature type="binding site" evidence="1">
    <location>
        <position position="271"/>
    </location>
    <ligand>
        <name>Mg(2+)</name>
        <dbReference type="ChEBI" id="CHEBI:18420"/>
        <label>2</label>
    </ligand>
</feature>
<feature type="binding site" evidence="1">
    <location>
        <position position="296"/>
    </location>
    <ligand>
        <name>Mg(2+)</name>
        <dbReference type="ChEBI" id="CHEBI:18420"/>
        <label>1</label>
    </ligand>
</feature>
<feature type="binding site" evidence="1">
    <location>
        <position position="307"/>
    </location>
    <ligand>
        <name>Mg(2+)</name>
        <dbReference type="ChEBI" id="CHEBI:18420"/>
        <label>2</label>
    </ligand>
</feature>
<feature type="binding site" evidence="1">
    <location>
        <position position="309"/>
    </location>
    <ligand>
        <name>Mg(2+)</name>
        <dbReference type="ChEBI" id="CHEBI:18420"/>
        <label>2</label>
    </ligand>
</feature>
<feature type="binding site" evidence="1">
    <location>
        <position position="339"/>
    </location>
    <ligand>
        <name>Mg(2+)</name>
        <dbReference type="ChEBI" id="CHEBI:18420"/>
        <label>1</label>
    </ligand>
</feature>
<dbReference type="EC" id="5.3.1.5" evidence="1"/>
<dbReference type="EMBL" id="CP001138">
    <property type="protein sequence ID" value="ACH50364.1"/>
    <property type="molecule type" value="Genomic_DNA"/>
</dbReference>
<dbReference type="RefSeq" id="WP_001149561.1">
    <property type="nucleotide sequence ID" value="NC_011149.1"/>
</dbReference>
<dbReference type="SMR" id="B5EX72"/>
<dbReference type="KEGG" id="sea:SeAg_B3875"/>
<dbReference type="HOGENOM" id="CLU_037261_1_0_6"/>
<dbReference type="Proteomes" id="UP000008819">
    <property type="component" value="Chromosome"/>
</dbReference>
<dbReference type="GO" id="GO:0005737">
    <property type="term" value="C:cytoplasm"/>
    <property type="evidence" value="ECO:0007669"/>
    <property type="project" value="UniProtKB-SubCell"/>
</dbReference>
<dbReference type="GO" id="GO:0000287">
    <property type="term" value="F:magnesium ion binding"/>
    <property type="evidence" value="ECO:0007669"/>
    <property type="project" value="UniProtKB-UniRule"/>
</dbReference>
<dbReference type="GO" id="GO:0009045">
    <property type="term" value="F:xylose isomerase activity"/>
    <property type="evidence" value="ECO:0007669"/>
    <property type="project" value="UniProtKB-UniRule"/>
</dbReference>
<dbReference type="GO" id="GO:0042732">
    <property type="term" value="P:D-xylose metabolic process"/>
    <property type="evidence" value="ECO:0007669"/>
    <property type="project" value="UniProtKB-UniRule"/>
</dbReference>
<dbReference type="FunFam" id="3.20.20.150:FF:000002">
    <property type="entry name" value="Xylose isomerase"/>
    <property type="match status" value="1"/>
</dbReference>
<dbReference type="Gene3D" id="3.20.20.150">
    <property type="entry name" value="Divalent-metal-dependent TIM barrel enzymes"/>
    <property type="match status" value="1"/>
</dbReference>
<dbReference type="HAMAP" id="MF_00455">
    <property type="entry name" value="Xylose_isom_A"/>
    <property type="match status" value="1"/>
</dbReference>
<dbReference type="InterPro" id="IPR036237">
    <property type="entry name" value="Xyl_isomerase-like_sf"/>
</dbReference>
<dbReference type="InterPro" id="IPR013452">
    <property type="entry name" value="Xylose_isom_bac"/>
</dbReference>
<dbReference type="InterPro" id="IPR001998">
    <property type="entry name" value="Xylose_isomerase"/>
</dbReference>
<dbReference type="NCBIfam" id="NF003998">
    <property type="entry name" value="PRK05474.1"/>
    <property type="match status" value="1"/>
</dbReference>
<dbReference type="NCBIfam" id="TIGR02630">
    <property type="entry name" value="xylose_isom_A"/>
    <property type="match status" value="1"/>
</dbReference>
<dbReference type="PANTHER" id="PTHR48408">
    <property type="match status" value="1"/>
</dbReference>
<dbReference type="PANTHER" id="PTHR48408:SF1">
    <property type="entry name" value="XYLOSE ISOMERASE"/>
    <property type="match status" value="1"/>
</dbReference>
<dbReference type="PRINTS" id="PR00688">
    <property type="entry name" value="XYLOSISMRASE"/>
</dbReference>
<dbReference type="SUPFAM" id="SSF51658">
    <property type="entry name" value="Xylose isomerase-like"/>
    <property type="match status" value="1"/>
</dbReference>
<dbReference type="PROSITE" id="PS51415">
    <property type="entry name" value="XYLOSE_ISOMERASE"/>
    <property type="match status" value="1"/>
</dbReference>
<organism>
    <name type="scientific">Salmonella agona (strain SL483)</name>
    <dbReference type="NCBI Taxonomy" id="454166"/>
    <lineage>
        <taxon>Bacteria</taxon>
        <taxon>Pseudomonadati</taxon>
        <taxon>Pseudomonadota</taxon>
        <taxon>Gammaproteobacteria</taxon>
        <taxon>Enterobacterales</taxon>
        <taxon>Enterobacteriaceae</taxon>
        <taxon>Salmonella</taxon>
    </lineage>
</organism>
<keyword id="KW-0119">Carbohydrate metabolism</keyword>
<keyword id="KW-0963">Cytoplasm</keyword>
<keyword id="KW-0413">Isomerase</keyword>
<keyword id="KW-0460">Magnesium</keyword>
<keyword id="KW-0479">Metal-binding</keyword>
<keyword id="KW-0859">Xylose metabolism</keyword>
<comment type="catalytic activity">
    <reaction evidence="1">
        <text>alpha-D-xylose = alpha-D-xylulofuranose</text>
        <dbReference type="Rhea" id="RHEA:22816"/>
        <dbReference type="ChEBI" id="CHEBI:28518"/>
        <dbReference type="ChEBI" id="CHEBI:188998"/>
        <dbReference type="EC" id="5.3.1.5"/>
    </reaction>
</comment>
<comment type="cofactor">
    <cofactor evidence="1">
        <name>Mg(2+)</name>
        <dbReference type="ChEBI" id="CHEBI:18420"/>
    </cofactor>
    <text evidence="1">Binds 2 magnesium ions per subunit.</text>
</comment>
<comment type="subunit">
    <text evidence="1">Homotetramer.</text>
</comment>
<comment type="subcellular location">
    <subcellularLocation>
        <location evidence="1">Cytoplasm</location>
    </subcellularLocation>
</comment>
<comment type="similarity">
    <text evidence="1">Belongs to the xylose isomerase family.</text>
</comment>
<evidence type="ECO:0000255" key="1">
    <source>
        <dbReference type="HAMAP-Rule" id="MF_00455"/>
    </source>
</evidence>
<protein>
    <recommendedName>
        <fullName evidence="1">Xylose isomerase</fullName>
        <ecNumber evidence="1">5.3.1.5</ecNumber>
    </recommendedName>
</protein>
<sequence length="440" mass="49701">MQAYFDQLDRVRYEGPQSTNPLAFRHYNPDELVLGKRMEDHLRFAACYWHTFCWNGADMFGVGAFNRPWQQPGEALELAKRKADVAFEFFHKLNVPFYCFHDVDVSPEGASLKEYKNNFAQMVDVLAAKQEQSGVKLLWGTANCFTNPRYGAGAATNPDPEVFSWAATQVVTAMNATHKLGGENYVLWGGREGYETLLNTDLRQEREQIGRFMQMVVEHKHKMGFQGTLLIEPKPQEPTKHQYDYDVATVYGFLKQFGLEKEIKVNIEANHATLAGHSFHHEIATAIALGIFGSVDANRGDAQLGWDTDQFPISVEENALVMYEILKAGGFTTGGLNFDAKVRRQSTDKYDLFYGHIGAMDTMALSLKIAARMVEDGELDKRVAKRYAGWNGELGQQILKGQLSLGELAQYAEQHNLAPVHQSGHQELLENLVNRYLFDK</sequence>
<name>XYLA_SALA4</name>
<proteinExistence type="inferred from homology"/>